<protein>
    <recommendedName>
        <fullName>Cytohesin-4</fullName>
    </recommendedName>
    <alternativeName>
        <fullName>PH, SEC7 and coiled-coil domain-containing protein 4</fullName>
    </alternativeName>
</protein>
<dbReference type="EMBL" id="AF125349">
    <property type="protein sequence ID" value="AAF28896.1"/>
    <property type="molecule type" value="mRNA"/>
</dbReference>
<dbReference type="EMBL" id="AF075458">
    <property type="protein sequence ID" value="AAF15389.1"/>
    <property type="molecule type" value="mRNA"/>
</dbReference>
<dbReference type="EMBL" id="CR456551">
    <property type="protein sequence ID" value="CAG30437.1"/>
    <property type="molecule type" value="mRNA"/>
</dbReference>
<dbReference type="EMBL" id="Z94160">
    <property type="status" value="NOT_ANNOTATED_CDS"/>
    <property type="molecule type" value="Genomic_DNA"/>
</dbReference>
<dbReference type="EMBL" id="BC041161">
    <property type="protein sequence ID" value="AAH41161.1"/>
    <property type="molecule type" value="mRNA"/>
</dbReference>
<dbReference type="CCDS" id="CCDS13946.1"/>
<dbReference type="RefSeq" id="NP_001304953.1">
    <property type="nucleotide sequence ID" value="NM_001318024.1"/>
</dbReference>
<dbReference type="RefSeq" id="NP_037517.1">
    <property type="nucleotide sequence ID" value="NM_013385.5"/>
</dbReference>
<dbReference type="SMR" id="Q9UIA0"/>
<dbReference type="BioGRID" id="118019">
    <property type="interactions" value="43"/>
</dbReference>
<dbReference type="FunCoup" id="Q9UIA0">
    <property type="interactions" value="1051"/>
</dbReference>
<dbReference type="IntAct" id="Q9UIA0">
    <property type="interactions" value="37"/>
</dbReference>
<dbReference type="MINT" id="Q9UIA0"/>
<dbReference type="STRING" id="9606.ENSP00000248901"/>
<dbReference type="iPTMnet" id="Q9UIA0"/>
<dbReference type="PhosphoSitePlus" id="Q9UIA0"/>
<dbReference type="BioMuta" id="CYTH4"/>
<dbReference type="DMDM" id="13124094"/>
<dbReference type="jPOST" id="Q9UIA0"/>
<dbReference type="MassIVE" id="Q9UIA0"/>
<dbReference type="PaxDb" id="9606-ENSP00000248901"/>
<dbReference type="PeptideAtlas" id="Q9UIA0"/>
<dbReference type="ProteomicsDB" id="84482"/>
<dbReference type="Antibodypedia" id="25912">
    <property type="antibodies" value="200 antibodies from 25 providers"/>
</dbReference>
<dbReference type="DNASU" id="27128"/>
<dbReference type="Ensembl" id="ENST00000248901.11">
    <property type="protein sequence ID" value="ENSP00000248901.6"/>
    <property type="gene ID" value="ENSG00000100055.21"/>
</dbReference>
<dbReference type="GeneID" id="27128"/>
<dbReference type="KEGG" id="hsa:27128"/>
<dbReference type="MANE-Select" id="ENST00000248901.11">
    <property type="protein sequence ID" value="ENSP00000248901.6"/>
    <property type="RefSeq nucleotide sequence ID" value="NM_013385.5"/>
    <property type="RefSeq protein sequence ID" value="NP_037517.1"/>
</dbReference>
<dbReference type="UCSC" id="uc003arf.4">
    <property type="organism name" value="human"/>
</dbReference>
<dbReference type="AGR" id="HGNC:9505"/>
<dbReference type="CTD" id="27128"/>
<dbReference type="DisGeNET" id="27128"/>
<dbReference type="GeneCards" id="CYTH4"/>
<dbReference type="HGNC" id="HGNC:9505">
    <property type="gene designation" value="CYTH4"/>
</dbReference>
<dbReference type="HPA" id="ENSG00000100055">
    <property type="expression patterns" value="Tissue enhanced (bone marrow, lymphoid tissue)"/>
</dbReference>
<dbReference type="MIM" id="606514">
    <property type="type" value="gene"/>
</dbReference>
<dbReference type="neXtProt" id="NX_Q9UIA0"/>
<dbReference type="OpenTargets" id="ENSG00000100055"/>
<dbReference type="PharmGKB" id="PA164718621"/>
<dbReference type="VEuPathDB" id="HostDB:ENSG00000100055"/>
<dbReference type="eggNOG" id="KOG0930">
    <property type="taxonomic scope" value="Eukaryota"/>
</dbReference>
<dbReference type="GeneTree" id="ENSGT00940000160865"/>
<dbReference type="HOGENOM" id="CLU_032820_3_0_1"/>
<dbReference type="InParanoid" id="Q9UIA0"/>
<dbReference type="OMA" id="LYNPNCK"/>
<dbReference type="OrthoDB" id="430364at2759"/>
<dbReference type="PAN-GO" id="Q9UIA0">
    <property type="GO annotations" value="0 GO annotations based on evolutionary models"/>
</dbReference>
<dbReference type="PhylomeDB" id="Q9UIA0"/>
<dbReference type="TreeFam" id="TF352091"/>
<dbReference type="PathwayCommons" id="Q9UIA0"/>
<dbReference type="Reactome" id="R-HSA-6811438">
    <property type="pathway name" value="Intra-Golgi traffic"/>
</dbReference>
<dbReference type="SignaLink" id="Q9UIA0"/>
<dbReference type="BioGRID-ORCS" id="27128">
    <property type="hits" value="14 hits in 1149 CRISPR screens"/>
</dbReference>
<dbReference type="ChiTaRS" id="CYTH4">
    <property type="organism name" value="human"/>
</dbReference>
<dbReference type="GeneWiki" id="CYTH4"/>
<dbReference type="GenomeRNAi" id="27128"/>
<dbReference type="Pharos" id="Q9UIA0">
    <property type="development level" value="Tbio"/>
</dbReference>
<dbReference type="PRO" id="PR:Q9UIA0"/>
<dbReference type="Proteomes" id="UP000005640">
    <property type="component" value="Chromosome 22"/>
</dbReference>
<dbReference type="RNAct" id="Q9UIA0">
    <property type="molecule type" value="protein"/>
</dbReference>
<dbReference type="Bgee" id="ENSG00000100055">
    <property type="expression patterns" value="Expressed in granulocyte and 140 other cell types or tissues"/>
</dbReference>
<dbReference type="ExpressionAtlas" id="Q9UIA0">
    <property type="expression patterns" value="baseline and differential"/>
</dbReference>
<dbReference type="GO" id="GO:0034451">
    <property type="term" value="C:centriolar satellite"/>
    <property type="evidence" value="ECO:0000314"/>
    <property type="project" value="HPA"/>
</dbReference>
<dbReference type="GO" id="GO:0005829">
    <property type="term" value="C:cytosol"/>
    <property type="evidence" value="ECO:0000314"/>
    <property type="project" value="HPA"/>
</dbReference>
<dbReference type="GO" id="GO:0000139">
    <property type="term" value="C:Golgi membrane"/>
    <property type="evidence" value="ECO:0000304"/>
    <property type="project" value="Reactome"/>
</dbReference>
<dbReference type="GO" id="GO:0045171">
    <property type="term" value="C:intercellular bridge"/>
    <property type="evidence" value="ECO:0000314"/>
    <property type="project" value="HPA"/>
</dbReference>
<dbReference type="GO" id="GO:0005886">
    <property type="term" value="C:plasma membrane"/>
    <property type="evidence" value="ECO:0000314"/>
    <property type="project" value="UniProtKB"/>
</dbReference>
<dbReference type="GO" id="GO:0005085">
    <property type="term" value="F:guanyl-nucleotide exchange factor activity"/>
    <property type="evidence" value="ECO:0000314"/>
    <property type="project" value="UniProtKB"/>
</dbReference>
<dbReference type="GO" id="GO:0008289">
    <property type="term" value="F:lipid binding"/>
    <property type="evidence" value="ECO:0007669"/>
    <property type="project" value="UniProtKB-KW"/>
</dbReference>
<dbReference type="GO" id="GO:0032012">
    <property type="term" value="P:regulation of ARF protein signal transduction"/>
    <property type="evidence" value="ECO:0007669"/>
    <property type="project" value="InterPro"/>
</dbReference>
<dbReference type="CDD" id="cd01252">
    <property type="entry name" value="PH_GRP1-like"/>
    <property type="match status" value="1"/>
</dbReference>
<dbReference type="CDD" id="cd00171">
    <property type="entry name" value="Sec7"/>
    <property type="match status" value="1"/>
</dbReference>
<dbReference type="FunFam" id="1.10.1000.11:FF:000002">
    <property type="entry name" value="Cytohesin 1"/>
    <property type="match status" value="1"/>
</dbReference>
<dbReference type="FunFam" id="1.10.220.20:FF:000003">
    <property type="entry name" value="Cytohesin 1"/>
    <property type="match status" value="1"/>
</dbReference>
<dbReference type="FunFam" id="2.30.29.30:FF:000009">
    <property type="entry name" value="Cytohesin 1"/>
    <property type="match status" value="1"/>
</dbReference>
<dbReference type="Gene3D" id="1.10.220.20">
    <property type="match status" value="1"/>
</dbReference>
<dbReference type="Gene3D" id="1.10.1000.11">
    <property type="entry name" value="Arf Nucleotide-binding Site Opener,domain 2"/>
    <property type="match status" value="1"/>
</dbReference>
<dbReference type="Gene3D" id="2.30.29.30">
    <property type="entry name" value="Pleckstrin-homology domain (PH domain)/Phosphotyrosine-binding domain (PTB)"/>
    <property type="match status" value="1"/>
</dbReference>
<dbReference type="InterPro" id="IPR011993">
    <property type="entry name" value="PH-like_dom_sf"/>
</dbReference>
<dbReference type="InterPro" id="IPR001849">
    <property type="entry name" value="PH_domain"/>
</dbReference>
<dbReference type="InterPro" id="IPR023394">
    <property type="entry name" value="Sec7_C_sf"/>
</dbReference>
<dbReference type="InterPro" id="IPR000904">
    <property type="entry name" value="Sec7_dom"/>
</dbReference>
<dbReference type="InterPro" id="IPR035999">
    <property type="entry name" value="Sec7_dom_sf"/>
</dbReference>
<dbReference type="PANTHER" id="PTHR10663:SF323">
    <property type="entry name" value="CYTOHESIN-4"/>
    <property type="match status" value="1"/>
</dbReference>
<dbReference type="PANTHER" id="PTHR10663">
    <property type="entry name" value="GUANYL-NUCLEOTIDE EXCHANGE FACTOR"/>
    <property type="match status" value="1"/>
</dbReference>
<dbReference type="Pfam" id="PF00169">
    <property type="entry name" value="PH"/>
    <property type="match status" value="1"/>
</dbReference>
<dbReference type="Pfam" id="PF01369">
    <property type="entry name" value="Sec7"/>
    <property type="match status" value="1"/>
</dbReference>
<dbReference type="SMART" id="SM00233">
    <property type="entry name" value="PH"/>
    <property type="match status" value="1"/>
</dbReference>
<dbReference type="SMART" id="SM00222">
    <property type="entry name" value="Sec7"/>
    <property type="match status" value="1"/>
</dbReference>
<dbReference type="SUPFAM" id="SSF50729">
    <property type="entry name" value="PH domain-like"/>
    <property type="match status" value="1"/>
</dbReference>
<dbReference type="SUPFAM" id="SSF48425">
    <property type="entry name" value="Sec7 domain"/>
    <property type="match status" value="1"/>
</dbReference>
<dbReference type="PROSITE" id="PS50003">
    <property type="entry name" value="PH_DOMAIN"/>
    <property type="match status" value="1"/>
</dbReference>
<dbReference type="PROSITE" id="PS50190">
    <property type="entry name" value="SEC7"/>
    <property type="match status" value="1"/>
</dbReference>
<proteinExistence type="evidence at protein level"/>
<gene>
    <name type="primary">CYTH4</name>
    <name type="synonym">CYT4</name>
    <name type="synonym">PSCD4</name>
</gene>
<reference key="1">
    <citation type="journal article" date="2000" name="J. Biol. Chem.">
        <title>Similarities in function and gene structure of cytohesin-4 and cytohesin-1, guanine nucleotide-exchange proteins for ADP-ribosylation factors.</title>
        <authorList>
            <person name="Ogasawara M."/>
            <person name="Kim S.C."/>
            <person name="Adamik R."/>
            <person name="Togawa A."/>
            <person name="Ferrans V.J."/>
            <person name="Takeda K."/>
            <person name="Kirby M."/>
            <person name="Moss J."/>
            <person name="Vaughan M."/>
        </authorList>
    </citation>
    <scope>NUCLEOTIDE SEQUENCE [MRNA]</scope>
    <scope>FUNCTION</scope>
    <scope>TISSUE SPECIFICITY</scope>
    <source>
        <tissue>Brain</tissue>
    </source>
</reference>
<reference key="2">
    <citation type="submission" date="1998-06" db="EMBL/GenBank/DDBJ databases">
        <title>cDNA cloning and genomic organization of cytohesin-4.</title>
        <authorList>
            <person name="Liu D."/>
            <person name="Zhang H."/>
            <person name="Lu J."/>
        </authorList>
    </citation>
    <scope>NUCLEOTIDE SEQUENCE [MRNA]</scope>
    <source>
        <tissue>Liver</tissue>
    </source>
</reference>
<reference key="3">
    <citation type="journal article" date="2004" name="Genome Biol.">
        <title>A genome annotation-driven approach to cloning the human ORFeome.</title>
        <authorList>
            <person name="Collins J.E."/>
            <person name="Wright C.L."/>
            <person name="Edwards C.A."/>
            <person name="Davis M.P."/>
            <person name="Grinham J.A."/>
            <person name="Cole C.G."/>
            <person name="Goward M.E."/>
            <person name="Aguado B."/>
            <person name="Mallya M."/>
            <person name="Mokrab Y."/>
            <person name="Huckle E.J."/>
            <person name="Beare D.M."/>
            <person name="Dunham I."/>
        </authorList>
    </citation>
    <scope>NUCLEOTIDE SEQUENCE [LARGE SCALE MRNA]</scope>
</reference>
<reference key="4">
    <citation type="journal article" date="1999" name="Nature">
        <title>The DNA sequence of human chromosome 22.</title>
        <authorList>
            <person name="Dunham I."/>
            <person name="Hunt A.R."/>
            <person name="Collins J.E."/>
            <person name="Bruskiewich R."/>
            <person name="Beare D.M."/>
            <person name="Clamp M."/>
            <person name="Smink L.J."/>
            <person name="Ainscough R."/>
            <person name="Almeida J.P."/>
            <person name="Babbage A.K."/>
            <person name="Bagguley C."/>
            <person name="Bailey J."/>
            <person name="Barlow K.F."/>
            <person name="Bates K.N."/>
            <person name="Beasley O.P."/>
            <person name="Bird C.P."/>
            <person name="Blakey S.E."/>
            <person name="Bridgeman A.M."/>
            <person name="Buck D."/>
            <person name="Burgess J."/>
            <person name="Burrill W.D."/>
            <person name="Burton J."/>
            <person name="Carder C."/>
            <person name="Carter N.P."/>
            <person name="Chen Y."/>
            <person name="Clark G."/>
            <person name="Clegg S.M."/>
            <person name="Cobley V.E."/>
            <person name="Cole C.G."/>
            <person name="Collier R.E."/>
            <person name="Connor R."/>
            <person name="Conroy D."/>
            <person name="Corby N.R."/>
            <person name="Coville G.J."/>
            <person name="Cox A.V."/>
            <person name="Davis J."/>
            <person name="Dawson E."/>
            <person name="Dhami P.D."/>
            <person name="Dockree C."/>
            <person name="Dodsworth S.J."/>
            <person name="Durbin R.M."/>
            <person name="Ellington A.G."/>
            <person name="Evans K.L."/>
            <person name="Fey J.M."/>
            <person name="Fleming K."/>
            <person name="French L."/>
            <person name="Garner A.A."/>
            <person name="Gilbert J.G.R."/>
            <person name="Goward M.E."/>
            <person name="Grafham D.V."/>
            <person name="Griffiths M.N.D."/>
            <person name="Hall C."/>
            <person name="Hall R.E."/>
            <person name="Hall-Tamlyn G."/>
            <person name="Heathcott R.W."/>
            <person name="Ho S."/>
            <person name="Holmes S."/>
            <person name="Hunt S.E."/>
            <person name="Jones M.C."/>
            <person name="Kershaw J."/>
            <person name="Kimberley A.M."/>
            <person name="King A."/>
            <person name="Laird G.K."/>
            <person name="Langford C.F."/>
            <person name="Leversha M.A."/>
            <person name="Lloyd C."/>
            <person name="Lloyd D.M."/>
            <person name="Martyn I.D."/>
            <person name="Mashreghi-Mohammadi M."/>
            <person name="Matthews L.H."/>
            <person name="Mccann O.T."/>
            <person name="Mcclay J."/>
            <person name="Mclaren S."/>
            <person name="McMurray A.A."/>
            <person name="Milne S.A."/>
            <person name="Mortimore B.J."/>
            <person name="Odell C.N."/>
            <person name="Pavitt R."/>
            <person name="Pearce A.V."/>
            <person name="Pearson D."/>
            <person name="Phillimore B.J.C.T."/>
            <person name="Phillips S.H."/>
            <person name="Plumb R.W."/>
            <person name="Ramsay H."/>
            <person name="Ramsey Y."/>
            <person name="Rogers L."/>
            <person name="Ross M.T."/>
            <person name="Scott C.E."/>
            <person name="Sehra H.K."/>
            <person name="Skuce C.D."/>
            <person name="Smalley S."/>
            <person name="Smith M.L."/>
            <person name="Soderlund C."/>
            <person name="Spragon L."/>
            <person name="Steward C.A."/>
            <person name="Sulston J.E."/>
            <person name="Swann R.M."/>
            <person name="Vaudin M."/>
            <person name="Wall M."/>
            <person name="Wallis J.M."/>
            <person name="Whiteley M.N."/>
            <person name="Willey D.L."/>
            <person name="Williams L."/>
            <person name="Williams S.A."/>
            <person name="Williamson H."/>
            <person name="Wilmer T.E."/>
            <person name="Wilming L."/>
            <person name="Wright C.L."/>
            <person name="Hubbard T."/>
            <person name="Bentley D.R."/>
            <person name="Beck S."/>
            <person name="Rogers J."/>
            <person name="Shimizu N."/>
            <person name="Minoshima S."/>
            <person name="Kawasaki K."/>
            <person name="Sasaki T."/>
            <person name="Asakawa S."/>
            <person name="Kudoh J."/>
            <person name="Shintani A."/>
            <person name="Shibuya K."/>
            <person name="Yoshizaki Y."/>
            <person name="Aoki N."/>
            <person name="Mitsuyama S."/>
            <person name="Roe B.A."/>
            <person name="Chen F."/>
            <person name="Chu L."/>
            <person name="Crabtree J."/>
            <person name="Deschamps S."/>
            <person name="Do A."/>
            <person name="Do T."/>
            <person name="Dorman A."/>
            <person name="Fang F."/>
            <person name="Fu Y."/>
            <person name="Hu P."/>
            <person name="Hua A."/>
            <person name="Kenton S."/>
            <person name="Lai H."/>
            <person name="Lao H.I."/>
            <person name="Lewis J."/>
            <person name="Lewis S."/>
            <person name="Lin S.-P."/>
            <person name="Loh P."/>
            <person name="Malaj E."/>
            <person name="Nguyen T."/>
            <person name="Pan H."/>
            <person name="Phan S."/>
            <person name="Qi S."/>
            <person name="Qian Y."/>
            <person name="Ray L."/>
            <person name="Ren Q."/>
            <person name="Shaull S."/>
            <person name="Sloan D."/>
            <person name="Song L."/>
            <person name="Wang Q."/>
            <person name="Wang Y."/>
            <person name="Wang Z."/>
            <person name="White J."/>
            <person name="Willingham D."/>
            <person name="Wu H."/>
            <person name="Yao Z."/>
            <person name="Zhan M."/>
            <person name="Zhang G."/>
            <person name="Chissoe S."/>
            <person name="Murray J."/>
            <person name="Miller N."/>
            <person name="Minx P."/>
            <person name="Fulton R."/>
            <person name="Johnson D."/>
            <person name="Bemis G."/>
            <person name="Bentley D."/>
            <person name="Bradshaw H."/>
            <person name="Bourne S."/>
            <person name="Cordes M."/>
            <person name="Du Z."/>
            <person name="Fulton L."/>
            <person name="Goela D."/>
            <person name="Graves T."/>
            <person name="Hawkins J."/>
            <person name="Hinds K."/>
            <person name="Kemp K."/>
            <person name="Latreille P."/>
            <person name="Layman D."/>
            <person name="Ozersky P."/>
            <person name="Rohlfing T."/>
            <person name="Scheet P."/>
            <person name="Walker C."/>
            <person name="Wamsley A."/>
            <person name="Wohldmann P."/>
            <person name="Pepin K."/>
            <person name="Nelson J."/>
            <person name="Korf I."/>
            <person name="Bedell J.A."/>
            <person name="Hillier L.W."/>
            <person name="Mardis E."/>
            <person name="Waterston R."/>
            <person name="Wilson R."/>
            <person name="Emanuel B.S."/>
            <person name="Shaikh T."/>
            <person name="Kurahashi H."/>
            <person name="Saitta S."/>
            <person name="Budarf M.L."/>
            <person name="McDermid H.E."/>
            <person name="Johnson A."/>
            <person name="Wong A.C.C."/>
            <person name="Morrow B.E."/>
            <person name="Edelmann L."/>
            <person name="Kim U.J."/>
            <person name="Shizuya H."/>
            <person name="Simon M.I."/>
            <person name="Dumanski J.P."/>
            <person name="Peyrard M."/>
            <person name="Kedra D."/>
            <person name="Seroussi E."/>
            <person name="Fransson I."/>
            <person name="Tapia I."/>
            <person name="Bruder C.E."/>
            <person name="O'Brien K.P."/>
            <person name="Wilkinson P."/>
            <person name="Bodenteich A."/>
            <person name="Hartman K."/>
            <person name="Hu X."/>
            <person name="Khan A.S."/>
            <person name="Lane L."/>
            <person name="Tilahun Y."/>
            <person name="Wright H."/>
        </authorList>
    </citation>
    <scope>NUCLEOTIDE SEQUENCE [LARGE SCALE GENOMIC DNA]</scope>
</reference>
<reference key="5">
    <citation type="journal article" date="2004" name="Genome Res.">
        <title>The status, quality, and expansion of the NIH full-length cDNA project: the Mammalian Gene Collection (MGC).</title>
        <authorList>
            <consortium name="The MGC Project Team"/>
        </authorList>
    </citation>
    <scope>NUCLEOTIDE SEQUENCE [LARGE SCALE MRNA]</scope>
    <source>
        <tissue>Blood</tissue>
    </source>
</reference>
<reference key="6">
    <citation type="journal article" date="2007" name="Curr. Biol.">
        <title>The Arl4 family of small G proteins can recruit the cytohesin Arf6 exchange factors to the plasma membrane.</title>
        <authorList>
            <person name="Hofmann I."/>
            <person name="Thompson A."/>
            <person name="Sanderson C.M."/>
            <person name="Munro S."/>
        </authorList>
    </citation>
    <scope>SUBCELLULAR LOCATION</scope>
</reference>
<comment type="function">
    <text evidence="5">Promotes guanine-nucleotide exchange on ARF1 and ARF5. Promotes the activation of ARF factors through replacement of GDP with GTP.</text>
</comment>
<comment type="interaction">
    <interactant intactId="EBI-11521003">
        <id>Q9UIA0</id>
    </interactant>
    <interactant intactId="EBI-11524851">
        <id>Q8NA61-2</id>
        <label>CBY2</label>
    </interactant>
    <organismsDiffer>false</organismsDiffer>
    <experiments>3</experiments>
</comment>
<comment type="interaction">
    <interactant intactId="EBI-11521003">
        <id>Q9UIA0</id>
    </interactant>
    <interactant intactId="EBI-744556">
        <id>Q96HB5</id>
        <label>CCDC120</label>
    </interactant>
    <organismsDiffer>false</organismsDiffer>
    <experiments>10</experiments>
</comment>
<comment type="interaction">
    <interactant intactId="EBI-11521003">
        <id>Q9UIA0</id>
    </interactant>
    <interactant intactId="EBI-750686">
        <id>Q8NCU1</id>
        <label>CCDC197</label>
    </interactant>
    <organismsDiffer>false</organismsDiffer>
    <experiments>3</experiments>
</comment>
<comment type="interaction">
    <interactant intactId="EBI-11521003">
        <id>Q9UIA0</id>
    </interactant>
    <interactant intactId="EBI-11943297">
        <id>Q4G0X9-5</id>
        <label>CCDC40</label>
    </interactant>
    <organismsDiffer>false</organismsDiffer>
    <experiments>3</experiments>
</comment>
<comment type="interaction">
    <interactant intactId="EBI-11521003">
        <id>Q9UIA0</id>
    </interactant>
    <interactant intactId="EBI-1045350">
        <id>Q16204</id>
        <label>CCDC6</label>
    </interactant>
    <organismsDiffer>false</organismsDiffer>
    <experiments>3</experiments>
</comment>
<comment type="interaction">
    <interactant intactId="EBI-11521003">
        <id>Q9UIA0</id>
    </interactant>
    <interactant intactId="EBI-741671">
        <id>Q969H4</id>
        <label>CNKSR1</label>
    </interactant>
    <organismsDiffer>false</organismsDiffer>
    <experiments>4</experiments>
</comment>
<comment type="interaction">
    <interactant intactId="EBI-11521003">
        <id>Q9UIA0</id>
    </interactant>
    <interactant intactId="EBI-1188472">
        <id>P78358</id>
        <label>CTAG1B</label>
    </interactant>
    <organismsDiffer>false</organismsDiffer>
    <experiments>3</experiments>
</comment>
<comment type="interaction">
    <interactant intactId="EBI-11521003">
        <id>Q9UIA0</id>
    </interactant>
    <interactant intactId="EBI-10303987">
        <id>Q9UHG0</id>
        <label>DCDC2</label>
    </interactant>
    <organismsDiffer>false</organismsDiffer>
    <experiments>3</experiments>
</comment>
<comment type="interaction">
    <interactant intactId="EBI-11521003">
        <id>Q9UIA0</id>
    </interactant>
    <interactant intactId="EBI-2806743">
        <id>P53539</id>
        <label>FOSB</label>
    </interactant>
    <organismsDiffer>false</organismsDiffer>
    <experiments>3</experiments>
</comment>
<comment type="interaction">
    <interactant intactId="EBI-11521003">
        <id>Q9UIA0</id>
    </interactant>
    <interactant intactId="EBI-10961706">
        <id>Q96ED9-2</id>
        <label>HOOK2</label>
    </interactant>
    <organismsDiffer>false</organismsDiffer>
    <experiments>3</experiments>
</comment>
<comment type="interaction">
    <interactant intactId="EBI-11521003">
        <id>Q9UIA0</id>
    </interactant>
    <interactant intactId="EBI-4401965">
        <id>Q8WWN9</id>
        <label>IPCEF1</label>
    </interactant>
    <organismsDiffer>false</organismsDiffer>
    <experiments>8</experiments>
</comment>
<comment type="interaction">
    <interactant intactId="EBI-11521003">
        <id>Q9UIA0</id>
    </interactant>
    <interactant intactId="EBI-2556193">
        <id>Q63ZY3</id>
        <label>KANK2</label>
    </interactant>
    <organismsDiffer>false</organismsDiffer>
    <experiments>3</experiments>
</comment>
<comment type="interaction">
    <interactant intactId="EBI-11521003">
        <id>Q9UIA0</id>
    </interactant>
    <interactant intactId="EBI-3437878">
        <id>Q86T90</id>
        <label>KIAA1328</label>
    </interactant>
    <organismsDiffer>false</organismsDiffer>
    <experiments>3</experiments>
</comment>
<comment type="interaction">
    <interactant intactId="EBI-11521003">
        <id>Q9UIA0</id>
    </interactant>
    <interactant intactId="EBI-356410">
        <id>P08779</id>
        <label>KRT16</label>
    </interactant>
    <organismsDiffer>false</organismsDiffer>
    <experiments>3</experiments>
</comment>
<comment type="interaction">
    <interactant intactId="EBI-11521003">
        <id>Q9UIA0</id>
    </interactant>
    <interactant intactId="EBI-1047093">
        <id>O76011</id>
        <label>KRT34</label>
    </interactant>
    <organismsDiffer>false</organismsDiffer>
    <experiments>3</experiments>
</comment>
<comment type="interaction">
    <interactant intactId="EBI-11521003">
        <id>Q9UIA0</id>
    </interactant>
    <interactant intactId="EBI-11742977">
        <id>Q15154-3</id>
        <label>PCM1</label>
    </interactant>
    <organismsDiffer>false</organismsDiffer>
    <experiments>3</experiments>
</comment>
<comment type="interaction">
    <interactant intactId="EBI-11521003">
        <id>Q9UIA0</id>
    </interactant>
    <interactant intactId="EBI-372273">
        <id>P20618</id>
        <label>PSMB1</label>
    </interactant>
    <organismsDiffer>false</organismsDiffer>
    <experiments>3</experiments>
</comment>
<comment type="interaction">
    <interactant intactId="EBI-11521003">
        <id>Q9UIA0</id>
    </interactant>
    <interactant intactId="EBI-307556">
        <id>Q6Q0C0</id>
        <label>TRAF7</label>
    </interactant>
    <organismsDiffer>false</organismsDiffer>
    <experiments>2</experiments>
</comment>
<comment type="interaction">
    <interactant intactId="EBI-11521003">
        <id>Q9UIA0</id>
    </interactant>
    <interactant intactId="EBI-739895">
        <id>Q8N6Y0</id>
        <label>USHBP1</label>
    </interactant>
    <organismsDiffer>false</organismsDiffer>
    <experiments>3</experiments>
</comment>
<comment type="subcellular location">
    <subcellularLocation>
        <location evidence="6">Cell membrane</location>
        <topology evidence="6">Peripheral membrane protein</topology>
    </subcellularLocation>
</comment>
<comment type="tissue specificity">
    <text evidence="5">Expressed predominantly in peripheral blood leukocytes.</text>
</comment>
<comment type="domain">
    <text evidence="1">Binds via its PH domain to the inositol head group of phosphatidylinositol 3,4,5-trisphosphate.</text>
</comment>
<comment type="domain">
    <text evidence="1">Autoinhibited by its C-terminal basic region.</text>
</comment>
<keyword id="KW-1003">Cell membrane</keyword>
<keyword id="KW-0175">Coiled coil</keyword>
<keyword id="KW-0344">Guanine-nucleotide releasing factor</keyword>
<keyword id="KW-0446">Lipid-binding</keyword>
<keyword id="KW-0472">Membrane</keyword>
<keyword id="KW-1267">Proteomics identification</keyword>
<keyword id="KW-1185">Reference proteome</keyword>
<organism>
    <name type="scientific">Homo sapiens</name>
    <name type="common">Human</name>
    <dbReference type="NCBI Taxonomy" id="9606"/>
    <lineage>
        <taxon>Eukaryota</taxon>
        <taxon>Metazoa</taxon>
        <taxon>Chordata</taxon>
        <taxon>Craniata</taxon>
        <taxon>Vertebrata</taxon>
        <taxon>Euteleostomi</taxon>
        <taxon>Mammalia</taxon>
        <taxon>Eutheria</taxon>
        <taxon>Euarchontoglires</taxon>
        <taxon>Primates</taxon>
        <taxon>Haplorrhini</taxon>
        <taxon>Catarrhini</taxon>
        <taxon>Hominidae</taxon>
        <taxon>Homo</taxon>
    </lineage>
</organism>
<evidence type="ECO:0000250" key="1"/>
<evidence type="ECO:0000255" key="2"/>
<evidence type="ECO:0000255" key="3">
    <source>
        <dbReference type="PROSITE-ProRule" id="PRU00145"/>
    </source>
</evidence>
<evidence type="ECO:0000255" key="4">
    <source>
        <dbReference type="PROSITE-ProRule" id="PRU00189"/>
    </source>
</evidence>
<evidence type="ECO:0000269" key="5">
    <source>
    </source>
</evidence>
<evidence type="ECO:0000269" key="6">
    <source>
    </source>
</evidence>
<name>CYH4_HUMAN</name>
<sequence>MDLCHPEPAELSSGETEELQRIKWHRKQLLEDIQKLKDEIADVFAQIDCFESAEESRMAQKEKELCIGRKKFNMDPAKGIQYFIEHKLLTPDVQDIARFLYKGEGLNKTAIGTYLGERDPINLQVLQAFVDCHEFANLNLVQALRQFLWSFRLPGEAQKIDRMMEAFATRYCLCNPGVFQSTDTCYVLSFSIIMLNTSLHNPNVRDRPPFERFVSMNRGINNGSDLPEDQLRNLFDSIKSEPFSIPEDDGNDLTHTFFNPDREGWLLKLGGRVKTWKRRWFILTDNCLYYFEFTTDKEPRGIIPLENLSVQKVDDPKKPFCLELYNPSCRGQKIKACKTDGDGRVVEGKHESYRISATSAEERDQWIESIRASITRVPFYDLVSTRKKKIASKQ</sequence>
<feature type="chain" id="PRO_0000120203" description="Cytohesin-4">
    <location>
        <begin position="1"/>
        <end position="394"/>
    </location>
</feature>
<feature type="domain" description="SEC7" evidence="4">
    <location>
        <begin position="54"/>
        <end position="241"/>
    </location>
</feature>
<feature type="domain" description="PH" evidence="3">
    <location>
        <begin position="259"/>
        <end position="375"/>
    </location>
</feature>
<feature type="region of interest" description="C-terminal autoinhibitory region" evidence="1">
    <location>
        <begin position="386"/>
        <end position="394"/>
    </location>
</feature>
<feature type="coiled-coil region" evidence="2">
    <location>
        <begin position="12"/>
        <end position="65"/>
    </location>
</feature>
<feature type="binding site" evidence="1">
    <location>
        <begin position="268"/>
        <end position="275"/>
    </location>
    <ligand>
        <name>a 1,2-diacyl-sn-glycero-3-phospho-(1D-myo-inositol-3,4,5-trisphosphate)</name>
        <dbReference type="ChEBI" id="CHEBI:57836"/>
    </ligand>
</feature>
<feature type="binding site" evidence="1">
    <location>
        <position position="279"/>
    </location>
    <ligand>
        <name>a 1,2-diacyl-sn-glycero-3-phospho-(1D-myo-inositol-3,4,5-trisphosphate)</name>
        <dbReference type="ChEBI" id="CHEBI:57836"/>
    </ligand>
</feature>
<feature type="binding site" evidence="1">
    <location>
        <position position="290"/>
    </location>
    <ligand>
        <name>a 1,2-diacyl-sn-glycero-3-phospho-(1D-myo-inositol-3,4,5-trisphosphate)</name>
        <dbReference type="ChEBI" id="CHEBI:57836"/>
    </ligand>
</feature>
<feature type="binding site" evidence="1">
    <location>
        <position position="300"/>
    </location>
    <ligand>
        <name>a 1,2-diacyl-sn-glycero-3-phospho-(1D-myo-inositol-3,4,5-trisphosphate)</name>
        <dbReference type="ChEBI" id="CHEBI:57836"/>
    </ligand>
</feature>
<feature type="sequence variant" id="VAR_051920" description="In dbSNP:rs16998061.">
    <original>M</original>
    <variation>V</variation>
    <location>
        <position position="74"/>
    </location>
</feature>
<accession>Q9UIA0</accession>
<accession>Q5R3F9</accession>
<accession>Q9UGT6</accession>